<keyword id="KW-0238">DNA-binding</keyword>
<keyword id="KW-0614">Plasmid</keyword>
<keyword id="KW-1185">Reference proteome</keyword>
<keyword id="KW-0804">Transcription</keyword>
<keyword id="KW-0805">Transcription regulation</keyword>
<organism>
    <name type="scientific">Sinorhizobium fredii (strain NBRC 101917 / NGR234)</name>
    <dbReference type="NCBI Taxonomy" id="394"/>
    <lineage>
        <taxon>Bacteria</taxon>
        <taxon>Pseudomonadati</taxon>
        <taxon>Pseudomonadota</taxon>
        <taxon>Alphaproteobacteria</taxon>
        <taxon>Hyphomicrobiales</taxon>
        <taxon>Rhizobiaceae</taxon>
        <taxon>Sinorhizobium/Ensifer group</taxon>
        <taxon>Sinorhizobium</taxon>
    </lineage>
</organism>
<evidence type="ECO:0000255" key="1">
    <source>
        <dbReference type="PROSITE-ProRule" id="PRU00257"/>
    </source>
</evidence>
<name>Y4AM_SINFN</name>
<feature type="chain" id="PRO_0000149775" description="Uncharacterized HTH-type transcriptional regulator y4aM">
    <location>
        <begin position="1"/>
        <end position="143"/>
    </location>
</feature>
<feature type="domain" description="HTH cro/C1-type" evidence="1">
    <location>
        <begin position="24"/>
        <end position="78"/>
    </location>
</feature>
<feature type="DNA-binding region" description="H-T-H motif" evidence="1">
    <location>
        <begin position="35"/>
        <end position="54"/>
    </location>
</feature>
<dbReference type="EMBL" id="U00090">
    <property type="protein sequence ID" value="AAB91610.1"/>
    <property type="molecule type" value="Genomic_DNA"/>
</dbReference>
<dbReference type="RefSeq" id="NP_443772.1">
    <property type="nucleotide sequence ID" value="NC_000914.2"/>
</dbReference>
<dbReference type="RefSeq" id="WP_010875077.1">
    <property type="nucleotide sequence ID" value="NC_000914.2"/>
</dbReference>
<dbReference type="SMR" id="P55360"/>
<dbReference type="KEGG" id="rhi:NGR_a00350"/>
<dbReference type="PATRIC" id="fig|394.7.peg.33"/>
<dbReference type="eggNOG" id="COG1396">
    <property type="taxonomic scope" value="Bacteria"/>
</dbReference>
<dbReference type="HOGENOM" id="CLU_066192_26_0_5"/>
<dbReference type="OrthoDB" id="9797172at2"/>
<dbReference type="Proteomes" id="UP000001054">
    <property type="component" value="Plasmid pNGR234a"/>
</dbReference>
<dbReference type="GO" id="GO:0003677">
    <property type="term" value="F:DNA binding"/>
    <property type="evidence" value="ECO:0007669"/>
    <property type="project" value="UniProtKB-KW"/>
</dbReference>
<dbReference type="CDD" id="cd00093">
    <property type="entry name" value="HTH_XRE"/>
    <property type="match status" value="1"/>
</dbReference>
<dbReference type="Gene3D" id="1.10.260.40">
    <property type="entry name" value="lambda repressor-like DNA-binding domains"/>
    <property type="match status" value="1"/>
</dbReference>
<dbReference type="InterPro" id="IPR001387">
    <property type="entry name" value="Cro/C1-type_HTH"/>
</dbReference>
<dbReference type="InterPro" id="IPR010982">
    <property type="entry name" value="Lambda_DNA-bd_dom_sf"/>
</dbReference>
<dbReference type="Pfam" id="PF01381">
    <property type="entry name" value="HTH_3"/>
    <property type="match status" value="1"/>
</dbReference>
<dbReference type="SMART" id="SM00530">
    <property type="entry name" value="HTH_XRE"/>
    <property type="match status" value="1"/>
</dbReference>
<dbReference type="SUPFAM" id="SSF47413">
    <property type="entry name" value="lambda repressor-like DNA-binding domains"/>
    <property type="match status" value="1"/>
</dbReference>
<dbReference type="PROSITE" id="PS50943">
    <property type="entry name" value="HTH_CROC1"/>
    <property type="match status" value="1"/>
</dbReference>
<proteinExistence type="predicted"/>
<gene>
    <name type="ordered locus">NGR_a00350</name>
    <name type="ORF">y4aM</name>
</gene>
<reference key="1">
    <citation type="journal article" date="1997" name="Nature">
        <title>Molecular basis of symbiosis between Rhizobium and legumes.</title>
        <authorList>
            <person name="Freiberg C.A."/>
            <person name="Fellay R."/>
            <person name="Bairoch A."/>
            <person name="Broughton W.J."/>
            <person name="Rosenthal A."/>
            <person name="Perret X."/>
        </authorList>
    </citation>
    <scope>NUCLEOTIDE SEQUENCE [LARGE SCALE GENOMIC DNA]</scope>
    <source>
        <strain>NBRC 101917 / NGR234</strain>
    </source>
</reference>
<reference key="2">
    <citation type="journal article" date="2009" name="Appl. Environ. Microbiol.">
        <title>Rhizobium sp. strain NGR234 possesses a remarkable number of secretion systems.</title>
        <authorList>
            <person name="Schmeisser C."/>
            <person name="Liesegang H."/>
            <person name="Krysciak D."/>
            <person name="Bakkou N."/>
            <person name="Le Quere A."/>
            <person name="Wollherr A."/>
            <person name="Heinemeyer I."/>
            <person name="Morgenstern B."/>
            <person name="Pommerening-Roeser A."/>
            <person name="Flores M."/>
            <person name="Palacios R."/>
            <person name="Brenner S."/>
            <person name="Gottschalk G."/>
            <person name="Schmitz R.A."/>
            <person name="Broughton W.J."/>
            <person name="Perret X."/>
            <person name="Strittmatter A.W."/>
            <person name="Streit W.R."/>
        </authorList>
    </citation>
    <scope>NUCLEOTIDE SEQUENCE [LARGE SCALE GENOMIC DNA]</scope>
    <source>
        <strain>NBRC 101917 / NGR234</strain>
    </source>
</reference>
<sequence>MLSVDPEKKRAKANAVDIYVGRRIRQRRRWQNMSQAALGEAIGVTFQQVQKYEKGSNRVGAGRLQQISDALEVHPSYFFEDMPDDTQSIGQGAPNQAYIPPEVIEFAASDEGVELIRAFSRVGNLNVRCRIVKLLKSLGEHDW</sequence>
<accession>P55360</accession>
<geneLocation type="plasmid">
    <name>sym pNGR234a</name>
</geneLocation>
<protein>
    <recommendedName>
        <fullName>Uncharacterized HTH-type transcriptional regulator y4aM</fullName>
    </recommendedName>
</protein>